<comment type="function">
    <text evidence="1">Transcription factor which regulates nonfermentable carbon utilization. Activator of gluconeogenetic genes (By similarity).</text>
</comment>
<comment type="subcellular location">
    <subcellularLocation>
        <location evidence="2">Nucleus</location>
    </subcellularLocation>
</comment>
<comment type="similarity">
    <text evidence="4">Belongs to the ERT1/acuK family.</text>
</comment>
<comment type="sequence caution" evidence="4">
    <conflict type="erroneous gene model prediction">
        <sequence resource="EMBL-CDS" id="EEH38109"/>
    </conflict>
</comment>
<evidence type="ECO:0000250" key="1"/>
<evidence type="ECO:0000255" key="2">
    <source>
        <dbReference type="PROSITE-ProRule" id="PRU00227"/>
    </source>
</evidence>
<evidence type="ECO:0000256" key="3">
    <source>
        <dbReference type="SAM" id="MobiDB-lite"/>
    </source>
</evidence>
<evidence type="ECO:0000305" key="4"/>
<feature type="chain" id="PRO_0000406444" description="Transcription activator of gluconeogenesis PAAG_01030">
    <location>
        <begin position="1"/>
        <end position="808"/>
    </location>
</feature>
<feature type="DNA-binding region" description="Zn(2)-C6 fungal-type" evidence="2">
    <location>
        <begin position="97"/>
        <end position="125"/>
    </location>
</feature>
<feature type="region of interest" description="Disordered" evidence="3">
    <location>
        <begin position="1"/>
        <end position="90"/>
    </location>
</feature>
<feature type="region of interest" description="Disordered" evidence="3">
    <location>
        <begin position="158"/>
        <end position="203"/>
    </location>
</feature>
<feature type="region of interest" description="Disordered" evidence="3">
    <location>
        <begin position="236"/>
        <end position="285"/>
    </location>
</feature>
<feature type="region of interest" description="Disordered" evidence="3">
    <location>
        <begin position="322"/>
        <end position="387"/>
    </location>
</feature>
<feature type="region of interest" description="Disordered" evidence="3">
    <location>
        <begin position="442"/>
        <end position="461"/>
    </location>
</feature>
<feature type="region of interest" description="Disordered" evidence="3">
    <location>
        <begin position="598"/>
        <end position="629"/>
    </location>
</feature>
<feature type="compositionally biased region" description="Low complexity" evidence="3">
    <location>
        <begin position="69"/>
        <end position="83"/>
    </location>
</feature>
<feature type="compositionally biased region" description="Polar residues" evidence="3">
    <location>
        <begin position="158"/>
        <end position="170"/>
    </location>
</feature>
<feature type="compositionally biased region" description="Low complexity" evidence="3">
    <location>
        <begin position="171"/>
        <end position="188"/>
    </location>
</feature>
<feature type="compositionally biased region" description="Polar residues" evidence="3">
    <location>
        <begin position="189"/>
        <end position="203"/>
    </location>
</feature>
<feature type="compositionally biased region" description="Polar residues" evidence="3">
    <location>
        <begin position="248"/>
        <end position="279"/>
    </location>
</feature>
<feature type="compositionally biased region" description="Polar residues" evidence="3">
    <location>
        <begin position="339"/>
        <end position="359"/>
    </location>
</feature>
<feature type="compositionally biased region" description="Polar residues" evidence="3">
    <location>
        <begin position="377"/>
        <end position="387"/>
    </location>
</feature>
<feature type="compositionally biased region" description="Low complexity" evidence="3">
    <location>
        <begin position="442"/>
        <end position="451"/>
    </location>
</feature>
<feature type="compositionally biased region" description="Low complexity" evidence="3">
    <location>
        <begin position="598"/>
        <end position="619"/>
    </location>
</feature>
<feature type="compositionally biased region" description="Polar residues" evidence="3">
    <location>
        <begin position="620"/>
        <end position="629"/>
    </location>
</feature>
<accession>C1GR85</accession>
<reference key="1">
    <citation type="journal article" date="2011" name="PLoS Genet.">
        <title>Comparative genomic analysis of human fungal pathogens causing paracoccidioidomycosis.</title>
        <authorList>
            <person name="Desjardins C.A."/>
            <person name="Champion M.D."/>
            <person name="Holder J.W."/>
            <person name="Muszewska A."/>
            <person name="Goldberg J."/>
            <person name="Bailao A.M."/>
            <person name="Brigido M.M."/>
            <person name="Ferreira M.E."/>
            <person name="Garcia A.M."/>
            <person name="Grynberg M."/>
            <person name="Gujja S."/>
            <person name="Heiman D.I."/>
            <person name="Henn M.R."/>
            <person name="Kodira C.D."/>
            <person name="Leon-Narvaez H."/>
            <person name="Longo L.V.G."/>
            <person name="Ma L.-J."/>
            <person name="Malavazi I."/>
            <person name="Matsuo A.L."/>
            <person name="Morais F.V."/>
            <person name="Pereira M."/>
            <person name="Rodriguez-Brito S."/>
            <person name="Sakthikumar S."/>
            <person name="Salem-Izacc S.M."/>
            <person name="Sykes S.M."/>
            <person name="Teixeira M.M."/>
            <person name="Vallejo M.C."/>
            <person name="Walter M.E."/>
            <person name="Yandava C."/>
            <person name="Young S."/>
            <person name="Zeng Q."/>
            <person name="Zucker J."/>
            <person name="Felipe M.S."/>
            <person name="Goldman G.H."/>
            <person name="Haas B.J."/>
            <person name="McEwen J.G."/>
            <person name="Nino-Vega G."/>
            <person name="Puccia R."/>
            <person name="San-Blas G."/>
            <person name="Soares C.M."/>
            <person name="Birren B.W."/>
            <person name="Cuomo C.A."/>
        </authorList>
    </citation>
    <scope>NUCLEOTIDE SEQUENCE [LARGE SCALE GENOMIC DNA]</scope>
    <source>
        <strain>ATCC MYA-826 / Pb01</strain>
    </source>
</reference>
<sequence>MTSSVRNGSPSPSPALPSTTTPAEQESRNAMTMANNPGDWDSSESRPQSLSNGKGIGNGMVANGHQKPSTSSTAASANNASAKDPLRPRRKKAKRACFACQRAHLTCGDERPCQRCIKRGLQDTCHDGVRKKAKYLHDAPNEALIPGIRGNLYNQAQAARNKVNSNSQQRNGTNSNSDNNSTNTNSNNKPSHQDVSTNFFSTPSANNYHNVYTQAKSRQSQHMPSRVMQDATMNPSAFQAQPPASPTFDLSSNPQNHTLSPSIAQNSGTTPSSSASQNPDPYGSTFFDPSHPALFNFDIASMNFGNRYGALEFGMLGHLATGAGDTPPSDTATRRGSIGRSSGTFTVQNFGEGSSNQSPFLFGGDPVLNDWNPAGQGPTNPRNIYNQNSVSGQMTDHPHAFAIESAPMNFASPTSTESPQMTTVTQFDDPSVNFSSRTTLMPPTNTQHQQQPQPPRISTPSLKNMQVGVKRRYRSPSSIYESVKEPYSYTSGFHSLTAFIQRRFSPQKTLQIAKALASIRPSFIATTKTLNQDDLIFMEKCFQRTLWEYEDFIDACGTPTIVCRRTGEIAAVGKEFSILTGWKKEVLLGKEPNLNVNTGGSSSSGVSSRGSSTYNSRNSATTTVMDNQSLPAGRTQPVFLAELLDDDSVIEFYEDFAKLAFGDSRGSVMTTCKLLKYKTKEDGVGLFRNSNGEVSAGGGDTDANDSAGAGVGDGTTTAVNGVSNGSSNNATNVNANGNVNVIPNDLSGASSMKSSPKQAWGKSRIAGEAGMNQLGFRDGKVECSYCWTVKRDVFDIPMLIVMNFLPCI</sequence>
<dbReference type="EMBL" id="KN293993">
    <property type="protein sequence ID" value="EEH38109.2"/>
    <property type="status" value="ALT_SEQ"/>
    <property type="molecule type" value="Genomic_DNA"/>
</dbReference>
<dbReference type="RefSeq" id="XP_015701003.1">
    <property type="nucleotide sequence ID" value="XM_015844222.1"/>
</dbReference>
<dbReference type="SMR" id="C1GR85"/>
<dbReference type="GeneID" id="9100690"/>
<dbReference type="KEGG" id="pbl:PAAG_01030"/>
<dbReference type="eggNOG" id="ENOG502R1M5">
    <property type="taxonomic scope" value="Eukaryota"/>
</dbReference>
<dbReference type="HOGENOM" id="CLU_010748_1_0_1"/>
<dbReference type="OrthoDB" id="2538135at2759"/>
<dbReference type="Proteomes" id="UP000002059">
    <property type="component" value="Partially assembled WGS sequence"/>
</dbReference>
<dbReference type="GO" id="GO:0005634">
    <property type="term" value="C:nucleus"/>
    <property type="evidence" value="ECO:0007669"/>
    <property type="project" value="UniProtKB-SubCell"/>
</dbReference>
<dbReference type="GO" id="GO:0000981">
    <property type="term" value="F:DNA-binding transcription factor activity, RNA polymerase II-specific"/>
    <property type="evidence" value="ECO:0007669"/>
    <property type="project" value="InterPro"/>
</dbReference>
<dbReference type="GO" id="GO:0000977">
    <property type="term" value="F:RNA polymerase II transcription regulatory region sequence-specific DNA binding"/>
    <property type="evidence" value="ECO:0007669"/>
    <property type="project" value="TreeGrafter"/>
</dbReference>
<dbReference type="GO" id="GO:0008270">
    <property type="term" value="F:zinc ion binding"/>
    <property type="evidence" value="ECO:0007669"/>
    <property type="project" value="InterPro"/>
</dbReference>
<dbReference type="GO" id="GO:0009267">
    <property type="term" value="P:cellular response to starvation"/>
    <property type="evidence" value="ECO:0007669"/>
    <property type="project" value="TreeGrafter"/>
</dbReference>
<dbReference type="GO" id="GO:0006094">
    <property type="term" value="P:gluconeogenesis"/>
    <property type="evidence" value="ECO:0007669"/>
    <property type="project" value="UniProtKB-KW"/>
</dbReference>
<dbReference type="CDD" id="cd00067">
    <property type="entry name" value="GAL4"/>
    <property type="match status" value="1"/>
</dbReference>
<dbReference type="Gene3D" id="4.10.240.10">
    <property type="entry name" value="Zn(2)-C6 fungal-type DNA-binding domain"/>
    <property type="match status" value="1"/>
</dbReference>
<dbReference type="InterPro" id="IPR050335">
    <property type="entry name" value="ERT1_acuK_gluconeogen_tf"/>
</dbReference>
<dbReference type="InterPro" id="IPR056751">
    <property type="entry name" value="PAS_13"/>
</dbReference>
<dbReference type="InterPro" id="IPR036864">
    <property type="entry name" value="Zn2-C6_fun-type_DNA-bd_sf"/>
</dbReference>
<dbReference type="InterPro" id="IPR001138">
    <property type="entry name" value="Zn2Cys6_DnaBD"/>
</dbReference>
<dbReference type="PANTHER" id="PTHR47659:SF1">
    <property type="entry name" value="TRANSCRIPTION ACTIVATOR OF GLUCONEOGENESIS ERT1"/>
    <property type="match status" value="1"/>
</dbReference>
<dbReference type="PANTHER" id="PTHR47659">
    <property type="entry name" value="ZN(II)2CYS6 TRANSCRIPTION FACTOR (EUROFUNG)-RELATED"/>
    <property type="match status" value="1"/>
</dbReference>
<dbReference type="Pfam" id="PF24990">
    <property type="entry name" value="PAS_13"/>
    <property type="match status" value="1"/>
</dbReference>
<dbReference type="SMART" id="SM00066">
    <property type="entry name" value="GAL4"/>
    <property type="match status" value="1"/>
</dbReference>
<dbReference type="SUPFAM" id="SSF57701">
    <property type="entry name" value="Zn2/Cys6 DNA-binding domain"/>
    <property type="match status" value="1"/>
</dbReference>
<dbReference type="PROSITE" id="PS50048">
    <property type="entry name" value="ZN2_CY6_FUNGAL_2"/>
    <property type="match status" value="1"/>
</dbReference>
<gene>
    <name type="ORF">PAAG_01030</name>
</gene>
<proteinExistence type="inferred from homology"/>
<organism>
    <name type="scientific">Paracoccidioides lutzii (strain ATCC MYA-826 / Pb01)</name>
    <name type="common">Paracoccidioides brasiliensis</name>
    <dbReference type="NCBI Taxonomy" id="502779"/>
    <lineage>
        <taxon>Eukaryota</taxon>
        <taxon>Fungi</taxon>
        <taxon>Dikarya</taxon>
        <taxon>Ascomycota</taxon>
        <taxon>Pezizomycotina</taxon>
        <taxon>Eurotiomycetes</taxon>
        <taxon>Eurotiomycetidae</taxon>
        <taxon>Onygenales</taxon>
        <taxon>Ajellomycetaceae</taxon>
        <taxon>Paracoccidioides</taxon>
    </lineage>
</organism>
<name>ACUK_PARBA</name>
<keyword id="KW-0010">Activator</keyword>
<keyword id="KW-0238">DNA-binding</keyword>
<keyword id="KW-0312">Gluconeogenesis</keyword>
<keyword id="KW-0479">Metal-binding</keyword>
<keyword id="KW-0539">Nucleus</keyword>
<keyword id="KW-1185">Reference proteome</keyword>
<keyword id="KW-0804">Transcription</keyword>
<keyword id="KW-0805">Transcription regulation</keyword>
<keyword id="KW-0862">Zinc</keyword>
<protein>
    <recommendedName>
        <fullName>Transcription activator of gluconeogenesis PAAG_01030</fullName>
    </recommendedName>
</protein>